<dbReference type="EMBL" id="AE017125">
    <property type="protein sequence ID" value="AAP77981.1"/>
    <property type="molecule type" value="Genomic_DNA"/>
</dbReference>
<dbReference type="RefSeq" id="WP_011116224.1">
    <property type="nucleotide sequence ID" value="NC_004917.1"/>
</dbReference>
<dbReference type="SMR" id="Q7VGD8"/>
<dbReference type="STRING" id="235279.HH_1384"/>
<dbReference type="KEGG" id="hhe:HH_1384"/>
<dbReference type="eggNOG" id="COG0092">
    <property type="taxonomic scope" value="Bacteria"/>
</dbReference>
<dbReference type="HOGENOM" id="CLU_058591_0_2_7"/>
<dbReference type="OrthoDB" id="9806396at2"/>
<dbReference type="Proteomes" id="UP000002495">
    <property type="component" value="Chromosome"/>
</dbReference>
<dbReference type="GO" id="GO:0022627">
    <property type="term" value="C:cytosolic small ribosomal subunit"/>
    <property type="evidence" value="ECO:0007669"/>
    <property type="project" value="TreeGrafter"/>
</dbReference>
<dbReference type="GO" id="GO:0003729">
    <property type="term" value="F:mRNA binding"/>
    <property type="evidence" value="ECO:0007669"/>
    <property type="project" value="UniProtKB-UniRule"/>
</dbReference>
<dbReference type="GO" id="GO:0019843">
    <property type="term" value="F:rRNA binding"/>
    <property type="evidence" value="ECO:0007669"/>
    <property type="project" value="UniProtKB-UniRule"/>
</dbReference>
<dbReference type="GO" id="GO:0003735">
    <property type="term" value="F:structural constituent of ribosome"/>
    <property type="evidence" value="ECO:0007669"/>
    <property type="project" value="InterPro"/>
</dbReference>
<dbReference type="GO" id="GO:0006412">
    <property type="term" value="P:translation"/>
    <property type="evidence" value="ECO:0007669"/>
    <property type="project" value="UniProtKB-UniRule"/>
</dbReference>
<dbReference type="CDD" id="cd02412">
    <property type="entry name" value="KH-II_30S_S3"/>
    <property type="match status" value="1"/>
</dbReference>
<dbReference type="FunFam" id="3.30.1140.32:FF:000006">
    <property type="entry name" value="30S ribosomal protein S3"/>
    <property type="match status" value="1"/>
</dbReference>
<dbReference type="FunFam" id="3.30.300.20:FF:000001">
    <property type="entry name" value="30S ribosomal protein S3"/>
    <property type="match status" value="1"/>
</dbReference>
<dbReference type="Gene3D" id="3.30.300.20">
    <property type="match status" value="1"/>
</dbReference>
<dbReference type="Gene3D" id="3.30.1140.32">
    <property type="entry name" value="Ribosomal protein S3, C-terminal domain"/>
    <property type="match status" value="1"/>
</dbReference>
<dbReference type="HAMAP" id="MF_01309_B">
    <property type="entry name" value="Ribosomal_uS3_B"/>
    <property type="match status" value="1"/>
</dbReference>
<dbReference type="InterPro" id="IPR004087">
    <property type="entry name" value="KH_dom"/>
</dbReference>
<dbReference type="InterPro" id="IPR015946">
    <property type="entry name" value="KH_dom-like_a/b"/>
</dbReference>
<dbReference type="InterPro" id="IPR004044">
    <property type="entry name" value="KH_dom_type_2"/>
</dbReference>
<dbReference type="InterPro" id="IPR009019">
    <property type="entry name" value="KH_sf_prok-type"/>
</dbReference>
<dbReference type="InterPro" id="IPR036419">
    <property type="entry name" value="Ribosomal_S3_C_sf"/>
</dbReference>
<dbReference type="InterPro" id="IPR005704">
    <property type="entry name" value="Ribosomal_uS3_bac-typ"/>
</dbReference>
<dbReference type="InterPro" id="IPR001351">
    <property type="entry name" value="Ribosomal_uS3_C"/>
</dbReference>
<dbReference type="InterPro" id="IPR018280">
    <property type="entry name" value="Ribosomal_uS3_CS"/>
</dbReference>
<dbReference type="NCBIfam" id="TIGR01009">
    <property type="entry name" value="rpsC_bact"/>
    <property type="match status" value="1"/>
</dbReference>
<dbReference type="PANTHER" id="PTHR11760">
    <property type="entry name" value="30S/40S RIBOSOMAL PROTEIN S3"/>
    <property type="match status" value="1"/>
</dbReference>
<dbReference type="PANTHER" id="PTHR11760:SF19">
    <property type="entry name" value="SMALL RIBOSOMAL SUBUNIT PROTEIN US3C"/>
    <property type="match status" value="1"/>
</dbReference>
<dbReference type="Pfam" id="PF07650">
    <property type="entry name" value="KH_2"/>
    <property type="match status" value="1"/>
</dbReference>
<dbReference type="Pfam" id="PF00189">
    <property type="entry name" value="Ribosomal_S3_C"/>
    <property type="match status" value="1"/>
</dbReference>
<dbReference type="SMART" id="SM00322">
    <property type="entry name" value="KH"/>
    <property type="match status" value="1"/>
</dbReference>
<dbReference type="SUPFAM" id="SSF54814">
    <property type="entry name" value="Prokaryotic type KH domain (KH-domain type II)"/>
    <property type="match status" value="1"/>
</dbReference>
<dbReference type="SUPFAM" id="SSF54821">
    <property type="entry name" value="Ribosomal protein S3 C-terminal domain"/>
    <property type="match status" value="1"/>
</dbReference>
<dbReference type="PROSITE" id="PS50823">
    <property type="entry name" value="KH_TYPE_2"/>
    <property type="match status" value="1"/>
</dbReference>
<dbReference type="PROSITE" id="PS00548">
    <property type="entry name" value="RIBOSOMAL_S3"/>
    <property type="match status" value="1"/>
</dbReference>
<protein>
    <recommendedName>
        <fullName evidence="1">Small ribosomal subunit protein uS3</fullName>
    </recommendedName>
    <alternativeName>
        <fullName evidence="3">30S ribosomal protein S3</fullName>
    </alternativeName>
</protein>
<keyword id="KW-1185">Reference proteome</keyword>
<keyword id="KW-0687">Ribonucleoprotein</keyword>
<keyword id="KW-0689">Ribosomal protein</keyword>
<keyword id="KW-0694">RNA-binding</keyword>
<keyword id="KW-0699">rRNA-binding</keyword>
<accession>Q7VGD8</accession>
<reference key="1">
    <citation type="journal article" date="2003" name="Proc. Natl. Acad. Sci. U.S.A.">
        <title>The complete genome sequence of the carcinogenic bacterium Helicobacter hepaticus.</title>
        <authorList>
            <person name="Suerbaum S."/>
            <person name="Josenhans C."/>
            <person name="Sterzenbach T."/>
            <person name="Drescher B."/>
            <person name="Brandt P."/>
            <person name="Bell M."/>
            <person name="Droege M."/>
            <person name="Fartmann B."/>
            <person name="Fischer H.-P."/>
            <person name="Ge Z."/>
            <person name="Hoerster A."/>
            <person name="Holland R."/>
            <person name="Klein K."/>
            <person name="Koenig J."/>
            <person name="Macko L."/>
            <person name="Mendz G.L."/>
            <person name="Nyakatura G."/>
            <person name="Schauer D.B."/>
            <person name="Shen Z."/>
            <person name="Weber J."/>
            <person name="Frosch M."/>
            <person name="Fox J.G."/>
        </authorList>
    </citation>
    <scope>NUCLEOTIDE SEQUENCE [LARGE SCALE GENOMIC DNA]</scope>
    <source>
        <strain>ATCC 51449 / 3B1</strain>
    </source>
</reference>
<comment type="function">
    <text evidence="1">Binds the lower part of the 30S subunit head. Binds mRNA in the 70S ribosome, positioning it for translation.</text>
</comment>
<comment type="subunit">
    <text evidence="1">Part of the 30S ribosomal subunit. Forms a tight complex with proteins S10 and S14.</text>
</comment>
<comment type="similarity">
    <text evidence="1">Belongs to the universal ribosomal protein uS3 family.</text>
</comment>
<proteinExistence type="inferred from homology"/>
<organism>
    <name type="scientific">Helicobacter hepaticus (strain ATCC 51449 / 3B1)</name>
    <dbReference type="NCBI Taxonomy" id="235279"/>
    <lineage>
        <taxon>Bacteria</taxon>
        <taxon>Pseudomonadati</taxon>
        <taxon>Campylobacterota</taxon>
        <taxon>Epsilonproteobacteria</taxon>
        <taxon>Campylobacterales</taxon>
        <taxon>Helicobacteraceae</taxon>
        <taxon>Helicobacter</taxon>
    </lineage>
</organism>
<feature type="chain" id="PRO_0000130129" description="Small ribosomal subunit protein uS3">
    <location>
        <begin position="1"/>
        <end position="236"/>
    </location>
</feature>
<feature type="domain" description="KH type-2" evidence="1">
    <location>
        <begin position="39"/>
        <end position="107"/>
    </location>
</feature>
<feature type="region of interest" description="Disordered" evidence="2">
    <location>
        <begin position="214"/>
        <end position="236"/>
    </location>
</feature>
<feature type="compositionally biased region" description="Basic and acidic residues" evidence="2">
    <location>
        <begin position="214"/>
        <end position="229"/>
    </location>
</feature>
<gene>
    <name evidence="1" type="primary">rpsC</name>
    <name type="ordered locus">HH_1384</name>
</gene>
<sequence length="236" mass="26710">MGQKVNPIGLRLGINRNWSSRWFSVSQTTPSNILEDHKIRKFLKREMYYAGVSEFIIERAANKIRVTVVASRPGLIIGKKGVDIDKHKEALKKILHKEVFINIKEAKRPQANAQLAAENIATQLEKRVAFRRAMKKVMQAAMKAGAKGIKVKVSGRLAGAEMARTEWYMEGRVPLHTLRAKIDYGFAEAMTTYGIIGVKVWIFKGEVLHKGILPEKKEESKSGDKEVRSKSRRGRQ</sequence>
<evidence type="ECO:0000255" key="1">
    <source>
        <dbReference type="HAMAP-Rule" id="MF_01309"/>
    </source>
</evidence>
<evidence type="ECO:0000256" key="2">
    <source>
        <dbReference type="SAM" id="MobiDB-lite"/>
    </source>
</evidence>
<evidence type="ECO:0000305" key="3"/>
<name>RS3_HELHP</name>